<protein>
    <recommendedName>
        <fullName evidence="1">Large ribosomal subunit protein uL13</fullName>
    </recommendedName>
    <alternativeName>
        <fullName evidence="2">50S ribosomal protein L13</fullName>
    </alternativeName>
</protein>
<comment type="function">
    <text evidence="1">This protein is one of the early assembly proteins of the 50S ribosomal subunit, although it is not seen to bind rRNA by itself. It is important during the early stages of 50S assembly.</text>
</comment>
<comment type="subunit">
    <text evidence="1">Part of the 50S ribosomal subunit.</text>
</comment>
<comment type="similarity">
    <text evidence="1">Belongs to the universal ribosomal protein uL13 family.</text>
</comment>
<feature type="chain" id="PRO_0000261823" description="Large ribosomal subunit protein uL13">
    <location>
        <begin position="1"/>
        <end position="142"/>
    </location>
</feature>
<dbReference type="EMBL" id="AE016795">
    <property type="protein sequence ID" value="AAO09115.1"/>
    <property type="molecule type" value="Genomic_DNA"/>
</dbReference>
<dbReference type="RefSeq" id="WP_011078684.1">
    <property type="nucleotide sequence ID" value="NC_004459.3"/>
</dbReference>
<dbReference type="SMR" id="Q8DEI9"/>
<dbReference type="GeneID" id="93894911"/>
<dbReference type="KEGG" id="vvu:VV1_0599"/>
<dbReference type="HOGENOM" id="CLU_082184_2_2_6"/>
<dbReference type="Proteomes" id="UP000002275">
    <property type="component" value="Chromosome 1"/>
</dbReference>
<dbReference type="GO" id="GO:0022625">
    <property type="term" value="C:cytosolic large ribosomal subunit"/>
    <property type="evidence" value="ECO:0007669"/>
    <property type="project" value="TreeGrafter"/>
</dbReference>
<dbReference type="GO" id="GO:0003729">
    <property type="term" value="F:mRNA binding"/>
    <property type="evidence" value="ECO:0007669"/>
    <property type="project" value="TreeGrafter"/>
</dbReference>
<dbReference type="GO" id="GO:0003735">
    <property type="term" value="F:structural constituent of ribosome"/>
    <property type="evidence" value="ECO:0007669"/>
    <property type="project" value="InterPro"/>
</dbReference>
<dbReference type="GO" id="GO:0017148">
    <property type="term" value="P:negative regulation of translation"/>
    <property type="evidence" value="ECO:0007669"/>
    <property type="project" value="TreeGrafter"/>
</dbReference>
<dbReference type="GO" id="GO:0006412">
    <property type="term" value="P:translation"/>
    <property type="evidence" value="ECO:0007669"/>
    <property type="project" value="UniProtKB-UniRule"/>
</dbReference>
<dbReference type="CDD" id="cd00392">
    <property type="entry name" value="Ribosomal_L13"/>
    <property type="match status" value="1"/>
</dbReference>
<dbReference type="FunFam" id="3.90.1180.10:FF:000001">
    <property type="entry name" value="50S ribosomal protein L13"/>
    <property type="match status" value="1"/>
</dbReference>
<dbReference type="Gene3D" id="3.90.1180.10">
    <property type="entry name" value="Ribosomal protein L13"/>
    <property type="match status" value="1"/>
</dbReference>
<dbReference type="HAMAP" id="MF_01366">
    <property type="entry name" value="Ribosomal_uL13"/>
    <property type="match status" value="1"/>
</dbReference>
<dbReference type="InterPro" id="IPR005822">
    <property type="entry name" value="Ribosomal_uL13"/>
</dbReference>
<dbReference type="InterPro" id="IPR005823">
    <property type="entry name" value="Ribosomal_uL13_bac-type"/>
</dbReference>
<dbReference type="InterPro" id="IPR023563">
    <property type="entry name" value="Ribosomal_uL13_CS"/>
</dbReference>
<dbReference type="InterPro" id="IPR036899">
    <property type="entry name" value="Ribosomal_uL13_sf"/>
</dbReference>
<dbReference type="NCBIfam" id="TIGR01066">
    <property type="entry name" value="rplM_bact"/>
    <property type="match status" value="1"/>
</dbReference>
<dbReference type="PANTHER" id="PTHR11545:SF2">
    <property type="entry name" value="LARGE RIBOSOMAL SUBUNIT PROTEIN UL13M"/>
    <property type="match status" value="1"/>
</dbReference>
<dbReference type="PANTHER" id="PTHR11545">
    <property type="entry name" value="RIBOSOMAL PROTEIN L13"/>
    <property type="match status" value="1"/>
</dbReference>
<dbReference type="Pfam" id="PF00572">
    <property type="entry name" value="Ribosomal_L13"/>
    <property type="match status" value="1"/>
</dbReference>
<dbReference type="PIRSF" id="PIRSF002181">
    <property type="entry name" value="Ribosomal_L13"/>
    <property type="match status" value="1"/>
</dbReference>
<dbReference type="SUPFAM" id="SSF52161">
    <property type="entry name" value="Ribosomal protein L13"/>
    <property type="match status" value="1"/>
</dbReference>
<dbReference type="PROSITE" id="PS00783">
    <property type="entry name" value="RIBOSOMAL_L13"/>
    <property type="match status" value="1"/>
</dbReference>
<evidence type="ECO:0000255" key="1">
    <source>
        <dbReference type="HAMAP-Rule" id="MF_01366"/>
    </source>
</evidence>
<evidence type="ECO:0000305" key="2"/>
<sequence>MKTFVAKPETVKRDWYVVDAEGKTLGRLASEIASRLRGKHKAEYTPHVDTGDYIIVINAEKVTVTGNKAAAKTYYRHTEFPGGIKSITFDKLIVRKPEMVIELAVKGMLPRGPLGRAMYRKLKVYAGAEHNHVAQQPKVLDI</sequence>
<keyword id="KW-0687">Ribonucleoprotein</keyword>
<keyword id="KW-0689">Ribosomal protein</keyword>
<proteinExistence type="inferred from homology"/>
<gene>
    <name evidence="1" type="primary">rplM</name>
    <name type="ordered locus">VV1_0599</name>
</gene>
<name>RL13_VIBVU</name>
<accession>Q8DEI9</accession>
<organism>
    <name type="scientific">Vibrio vulnificus (strain CMCP6)</name>
    <dbReference type="NCBI Taxonomy" id="216895"/>
    <lineage>
        <taxon>Bacteria</taxon>
        <taxon>Pseudomonadati</taxon>
        <taxon>Pseudomonadota</taxon>
        <taxon>Gammaproteobacteria</taxon>
        <taxon>Vibrionales</taxon>
        <taxon>Vibrionaceae</taxon>
        <taxon>Vibrio</taxon>
    </lineage>
</organism>
<reference key="1">
    <citation type="submission" date="2002-12" db="EMBL/GenBank/DDBJ databases">
        <title>Complete genome sequence of Vibrio vulnificus CMCP6.</title>
        <authorList>
            <person name="Rhee J.H."/>
            <person name="Kim S.Y."/>
            <person name="Chung S.S."/>
            <person name="Kim J.J."/>
            <person name="Moon Y.H."/>
            <person name="Jeong H."/>
            <person name="Choy H.E."/>
        </authorList>
    </citation>
    <scope>NUCLEOTIDE SEQUENCE [LARGE SCALE GENOMIC DNA]</scope>
    <source>
        <strain>CMCP6</strain>
    </source>
</reference>